<feature type="chain" id="PRO_0000280158" description="Neuraminidase">
    <location>
        <begin position="1" status="less than"/>
        <end position="446"/>
    </location>
</feature>
<feature type="region of interest" description="Hypervariable stalk region" evidence="1">
    <location>
        <begin position="13"/>
        <end position="65"/>
    </location>
</feature>
<feature type="region of interest" description="Head of neuraminidase" evidence="1">
    <location>
        <begin position="68"/>
        <end position="446"/>
    </location>
</feature>
<feature type="region of interest" description="Disordered" evidence="2">
    <location>
        <begin position="304"/>
        <end position="327"/>
    </location>
</feature>
<feature type="compositionally biased region" description="Polar residues" evidence="2">
    <location>
        <begin position="308"/>
        <end position="320"/>
    </location>
</feature>
<feature type="active site" description="Proton donor/acceptor" evidence="1">
    <location>
        <position position="128"/>
    </location>
</feature>
<feature type="active site" description="Nucleophile" evidence="1">
    <location>
        <position position="383"/>
    </location>
</feature>
<feature type="binding site" evidence="1">
    <location>
        <position position="95"/>
    </location>
    <ligand>
        <name>substrate</name>
    </ligand>
</feature>
<feature type="binding site" evidence="1">
    <location>
        <position position="129"/>
    </location>
    <ligand>
        <name>substrate</name>
    </ligand>
</feature>
<feature type="binding site" evidence="1">
    <location>
        <begin position="253"/>
        <end position="254"/>
    </location>
    <ligand>
        <name>substrate</name>
    </ligand>
</feature>
<feature type="binding site" evidence="1">
    <location>
        <position position="269"/>
    </location>
    <ligand>
        <name>substrate</name>
    </ligand>
</feature>
<feature type="binding site" evidence="1">
    <location>
        <position position="270"/>
    </location>
    <ligand>
        <name>Ca(2+)</name>
        <dbReference type="ChEBI" id="CHEBI:29108"/>
    </ligand>
</feature>
<feature type="binding site" evidence="1">
    <location>
        <position position="274"/>
    </location>
    <ligand>
        <name>Ca(2+)</name>
        <dbReference type="ChEBI" id="CHEBI:29108"/>
    </ligand>
</feature>
<feature type="binding site" evidence="1">
    <location>
        <position position="301"/>
    </location>
    <ligand>
        <name>Ca(2+)</name>
        <dbReference type="ChEBI" id="CHEBI:29108"/>
    </ligand>
</feature>
<feature type="binding site" evidence="1">
    <location>
        <position position="348"/>
    </location>
    <ligand>
        <name>substrate</name>
    </ligand>
</feature>
<feature type="glycosylation site" description="N-linked (GlcNAc...) asparagine; by host" evidence="1">
    <location>
        <position position="38"/>
    </location>
</feature>
<feature type="glycosylation site" description="N-linked (GlcNAc...) asparagine; by host" evidence="1">
    <location>
        <position position="47"/>
    </location>
</feature>
<feature type="glycosylation site" description="N-linked (GlcNAc...) asparagine; by host" evidence="1">
    <location>
        <position position="63"/>
    </location>
</feature>
<feature type="glycosylation site" description="N-linked (GlcNAc...) asparagine; by host" evidence="1">
    <location>
        <position position="123"/>
    </location>
</feature>
<feature type="glycosylation site" description="N-linked (GlcNAc...) asparagine; by host" evidence="1">
    <location>
        <position position="177"/>
    </location>
</feature>
<feature type="glycosylation site" description="N-linked (GlcNAc...) asparagine; by host" evidence="1">
    <location>
        <position position="211"/>
    </location>
</feature>
<feature type="glycosylation site" description="N-linked (GlcNAc...) asparagine; by host" evidence="1">
    <location>
        <position position="379"/>
    </location>
</feature>
<feature type="disulfide bond" evidence="1">
    <location>
        <begin position="69"/>
        <end position="394"/>
    </location>
</feature>
<feature type="disulfide bond" evidence="1">
    <location>
        <begin position="101"/>
        <end position="106"/>
    </location>
</feature>
<feature type="disulfide bond" evidence="1">
    <location>
        <begin position="160"/>
        <end position="207"/>
    </location>
</feature>
<feature type="disulfide bond" evidence="1">
    <location>
        <begin position="209"/>
        <end position="214"/>
    </location>
</feature>
<feature type="disulfide bond" evidence="1">
    <location>
        <begin position="255"/>
        <end position="268"/>
    </location>
</feature>
<feature type="disulfide bond" evidence="1">
    <location>
        <begin position="257"/>
        <end position="266"/>
    </location>
</feature>
<feature type="disulfide bond" evidence="1">
    <location>
        <begin position="295"/>
        <end position="314"/>
    </location>
</feature>
<feature type="disulfide bond" evidence="1">
    <location>
        <begin position="398"/>
        <end position="424"/>
    </location>
</feature>
<feature type="non-terminal residue">
    <location>
        <position position="1"/>
    </location>
</feature>
<dbReference type="EC" id="3.2.1.18" evidence="1"/>
<dbReference type="EMBL" id="D21194">
    <property type="protein sequence ID" value="BAA04730.1"/>
    <property type="molecule type" value="Genomic_RNA"/>
</dbReference>
<dbReference type="SMR" id="Q67344"/>
<dbReference type="BindingDB" id="Q67344"/>
<dbReference type="CAZy" id="GH34">
    <property type="family name" value="Glycoside Hydrolase Family 34"/>
</dbReference>
<dbReference type="GlyCosmos" id="Q67344">
    <property type="glycosylation" value="7 sites, No reported glycans"/>
</dbReference>
<dbReference type="GO" id="GO:0020002">
    <property type="term" value="C:host cell plasma membrane"/>
    <property type="evidence" value="ECO:0007669"/>
    <property type="project" value="UniProtKB-SubCell"/>
</dbReference>
<dbReference type="GO" id="GO:0016020">
    <property type="term" value="C:membrane"/>
    <property type="evidence" value="ECO:0007669"/>
    <property type="project" value="UniProtKB-KW"/>
</dbReference>
<dbReference type="GO" id="GO:0055036">
    <property type="term" value="C:virion membrane"/>
    <property type="evidence" value="ECO:0007669"/>
    <property type="project" value="UniProtKB-SubCell"/>
</dbReference>
<dbReference type="GO" id="GO:0004308">
    <property type="term" value="F:exo-alpha-sialidase activity"/>
    <property type="evidence" value="ECO:0007669"/>
    <property type="project" value="UniProtKB-EC"/>
</dbReference>
<dbReference type="GO" id="GO:0046872">
    <property type="term" value="F:metal ion binding"/>
    <property type="evidence" value="ECO:0007669"/>
    <property type="project" value="UniProtKB-KW"/>
</dbReference>
<dbReference type="GO" id="GO:0005975">
    <property type="term" value="P:carbohydrate metabolic process"/>
    <property type="evidence" value="ECO:0007669"/>
    <property type="project" value="InterPro"/>
</dbReference>
<dbReference type="GO" id="GO:0046761">
    <property type="term" value="P:viral budding from plasma membrane"/>
    <property type="evidence" value="ECO:0007669"/>
    <property type="project" value="InterPro"/>
</dbReference>
<dbReference type="CDD" id="cd15483">
    <property type="entry name" value="Influenza_NA"/>
    <property type="match status" value="1"/>
</dbReference>
<dbReference type="Gene3D" id="2.120.10.10">
    <property type="match status" value="1"/>
</dbReference>
<dbReference type="HAMAP" id="MF_04071">
    <property type="entry name" value="INFV_NRAM"/>
    <property type="match status" value="1"/>
</dbReference>
<dbReference type="InterPro" id="IPR001860">
    <property type="entry name" value="Glyco_hydro_34"/>
</dbReference>
<dbReference type="InterPro" id="IPR033654">
    <property type="entry name" value="Sialidase_Influenza_A/B"/>
</dbReference>
<dbReference type="InterPro" id="IPR036278">
    <property type="entry name" value="Sialidase_sf"/>
</dbReference>
<dbReference type="Pfam" id="PF00064">
    <property type="entry name" value="Neur"/>
    <property type="match status" value="1"/>
</dbReference>
<dbReference type="SUPFAM" id="SSF50939">
    <property type="entry name" value="Sialidases"/>
    <property type="match status" value="1"/>
</dbReference>
<keyword id="KW-0106">Calcium</keyword>
<keyword id="KW-1015">Disulfide bond</keyword>
<keyword id="KW-0325">Glycoprotein</keyword>
<keyword id="KW-0326">Glycosidase</keyword>
<keyword id="KW-1032">Host cell membrane</keyword>
<keyword id="KW-1043">Host membrane</keyword>
<keyword id="KW-0378">Hydrolase</keyword>
<keyword id="KW-0472">Membrane</keyword>
<keyword id="KW-0479">Metal-binding</keyword>
<keyword id="KW-0735">Signal-anchor</keyword>
<keyword id="KW-0812">Transmembrane</keyword>
<keyword id="KW-1133">Transmembrane helix</keyword>
<keyword id="KW-0946">Virion</keyword>
<evidence type="ECO:0000255" key="1">
    <source>
        <dbReference type="HAMAP-Rule" id="MF_04071"/>
    </source>
</evidence>
<evidence type="ECO:0000256" key="2">
    <source>
        <dbReference type="SAM" id="MobiDB-lite"/>
    </source>
</evidence>
<organism>
    <name type="scientific">Influenza A virus (strain A/Swine/Hong Kong/127/1982 H3N2)</name>
    <dbReference type="NCBI Taxonomy" id="384483"/>
    <lineage>
        <taxon>Viruses</taxon>
        <taxon>Riboviria</taxon>
        <taxon>Orthornavirae</taxon>
        <taxon>Negarnaviricota</taxon>
        <taxon>Polyploviricotina</taxon>
        <taxon>Insthoviricetes</taxon>
        <taxon>Articulavirales</taxon>
        <taxon>Orthomyxoviridae</taxon>
        <taxon>Alphainfluenzavirus</taxon>
        <taxon>Alphainfluenzavirus influenzae</taxon>
        <taxon>Influenza A virus</taxon>
    </lineage>
</organism>
<reference key="1">
    <citation type="journal article" date="1995" name="J. Gen. Virol.">
        <title>Genetic analysis of porcine H3N2 viruses originating in Southern China.</title>
        <authorList>
            <person name="Nerome K."/>
            <person name="Kanegae Y."/>
            <person name="Shortridge K.F."/>
            <person name="Sugita S."/>
            <person name="Ishida M."/>
        </authorList>
    </citation>
    <scope>NUCLEOTIDE SEQUENCE [GENOMIC RNA]</scope>
</reference>
<reference key="2">
    <citation type="journal article" date="2004" name="Virus Res.">
        <title>Assembly and budding of influenza virus.</title>
        <authorList>
            <person name="Nayak D.P."/>
            <person name="Hui E.K."/>
            <person name="Barman S."/>
        </authorList>
    </citation>
    <scope>REVIEW</scope>
</reference>
<reference key="3">
    <citation type="journal article" date="2005" name="N. Engl. J. Med.">
        <title>Neuraminidase inhibitors for influenza.</title>
        <authorList>
            <person name="Moscona A."/>
        </authorList>
    </citation>
    <scope>REVIEW</scope>
</reference>
<reference key="4">
    <citation type="journal article" date="2005" name="Biol. Pharm. Bull.">
        <title>Sialobiology of influenza: molecular mechanism of host range variation of influenza viruses.</title>
        <authorList>
            <person name="Suzuki Y."/>
        </authorList>
    </citation>
    <scope>REVIEW</scope>
</reference>
<comment type="function">
    <text evidence="1">Catalyzes the removal of terminal sialic acid residues from viral and cellular glycoconjugates. Cleaves off the terminal sialic acids on the glycosylated HA during virus budding to facilitate virus release. Additionally helps virus spread through the circulation by further removing sialic acids from the cell surface. These cleavages prevent self-aggregation and ensure the efficient spread of the progeny virus from cell to cell. Otherwise, infection would be limited to one round of replication. Described as a receptor-destroying enzyme because it cleaves a terminal sialic acid from the cellular receptors. May facilitate viral invasion of the upper airways by cleaving the sialic acid moieties on the mucin of the airway epithelial cells. Likely to plays a role in the budding process through its association with lipid rafts during intracellular transport. May additionally display a raft-association independent effect on budding. Plays a role in the determination of host range restriction on replication and virulence. Sialidase activity in late endosome/lysosome traffic seems to enhance virus replication.</text>
</comment>
<comment type="catalytic activity">
    <reaction evidence="1">
        <text>Hydrolysis of alpha-(2-&gt;3)-, alpha-(2-&gt;6)-, alpha-(2-&gt;8)- glycosidic linkages of terminal sialic acid residues in oligosaccharides, glycoproteins, glycolipids, colominic acid and synthetic substrates.</text>
        <dbReference type="EC" id="3.2.1.18"/>
    </reaction>
</comment>
<comment type="cofactor">
    <cofactor evidence="1">
        <name>Ca(2+)</name>
        <dbReference type="ChEBI" id="CHEBI:29108"/>
    </cofactor>
</comment>
<comment type="activity regulation">
    <text evidence="1">Inhibited by the neuraminidase inhibitors zanamivir (Relenza) and oseltamivir (Tamiflu). These drugs interfere with the release of progeny virus from infected cells and are effective against all influenza strains. Resistance to neuraminidase inhibitors is quite rare.</text>
</comment>
<comment type="subunit">
    <text evidence="1">Homotetramer.</text>
</comment>
<comment type="subcellular location">
    <subcellularLocation>
        <location evidence="1">Virion membrane</location>
    </subcellularLocation>
    <subcellularLocation>
        <location evidence="1">Host apical cell membrane</location>
        <topology evidence="1">Single-pass type II membrane protein</topology>
    </subcellularLocation>
    <text evidence="1">Preferentially accumulates at the apical plasma membrane in infected polarized epithelial cells, which is the virus assembly site. Uses lipid rafts for cell surface transport and apical sorting. In the virion, forms a mushroom-shaped spike on the surface of the membrane.</text>
</comment>
<comment type="domain">
    <text evidence="1">Intact N-terminus is essential for virion morphogenesis. Possesses two apical sorting signals, one in the ectodomain, which is likely to be a glycan, and the other in the transmembrane domain. The transmembrane domain also plays a role in lipid raft association.</text>
</comment>
<comment type="PTM">
    <text evidence="1">N-glycosylated.</text>
</comment>
<comment type="miscellaneous">
    <text>The influenza A genome consist of 8 RNA segments. Genetic variation of hemagglutinin and/or neuraminidase genes results in the emergence of new influenza strains. The mechanism of variation can be the result of point mutations or the result of genetic reassortment between segments of two different strains.</text>
</comment>
<comment type="similarity">
    <text evidence="1">Belongs to the glycosyl hydrolase 34 family.</text>
</comment>
<accession>Q67344</accession>
<name>NRAM_I82A7</name>
<gene>
    <name evidence="1" type="primary">NA</name>
</gene>
<protein>
    <recommendedName>
        <fullName evidence="1">Neuraminidase</fullName>
        <ecNumber evidence="1">3.2.1.18</ecNumber>
    </recommendedName>
</protein>
<sequence length="446" mass="49915">MQIAILVTTVTLHFNQYECDSLADNQVMPCEPIIIERNITEIIYLTNTTIEKEICPKLMEYRNWSRPQCKITGFAPFSKDNSIRLSAGGDIWVTREPYVSCDPGKCYQFALGQGTTLDNKHSNDTIHDRIPHRTLLMNELGVPFHLGTRQVCIAWSSSSCHDGKAWLHVCVTGDDKNATASFIYDGRLVDSMGSWSQNILRTQESECVCINGTCTVVMTDGSASGRADTRILFIEEGKIVHISPLSGSAQHVEECSCYPRYPSVRCICRDNWKGSNRPIVDINIKDYSIDSRYVCSGLVGDTPRNNDRSSSSDCKNPNNDKGNHGVKGWAFDDGNDVWMGRTISKDSRSGYETFKVIDGWSTPNSKSQINRQVIVDRDNRSGYSGIFSVESKGCINRCFYVELIRGRKQETRVWWTSSSIVVFCGTSGTYGKGSWPDGANINFMPI</sequence>
<organismHost>
    <name type="scientific">Aves</name>
    <dbReference type="NCBI Taxonomy" id="8782"/>
</organismHost>
<organismHost>
    <name type="scientific">Cetacea</name>
    <name type="common">whales</name>
    <dbReference type="NCBI Taxonomy" id="9721"/>
</organismHost>
<organismHost>
    <name type="scientific">Homo sapiens</name>
    <name type="common">Human</name>
    <dbReference type="NCBI Taxonomy" id="9606"/>
</organismHost>
<organismHost>
    <name type="scientific">Phocidae</name>
    <name type="common">true seals</name>
    <dbReference type="NCBI Taxonomy" id="9709"/>
</organismHost>
<organismHost>
    <name type="scientific">Sus scrofa</name>
    <name type="common">Pig</name>
    <dbReference type="NCBI Taxonomy" id="9823"/>
</organismHost>
<proteinExistence type="inferred from homology"/>